<feature type="chain" id="PRO_0000169854" description="Alpha-galactosidase">
    <location>
        <begin position="1"/>
        <end position="451"/>
    </location>
</feature>
<feature type="active site" description="Proton donor" evidence="1">
    <location>
        <position position="174"/>
    </location>
</feature>
<feature type="binding site" evidence="1">
    <location>
        <begin position="5"/>
        <end position="71"/>
    </location>
    <ligand>
        <name>NAD(+)</name>
        <dbReference type="ChEBI" id="CHEBI:57540"/>
    </ligand>
</feature>
<feature type="binding site" evidence="1">
    <location>
        <position position="151"/>
    </location>
    <ligand>
        <name>substrate</name>
    </ligand>
</feature>
<feature type="binding site" evidence="1">
    <location>
        <position position="173"/>
    </location>
    <ligand>
        <name>Mn(2+)</name>
        <dbReference type="ChEBI" id="CHEBI:29035"/>
    </ligand>
</feature>
<feature type="binding site" evidence="1">
    <location>
        <position position="203"/>
    </location>
    <ligand>
        <name>Mn(2+)</name>
        <dbReference type="ChEBI" id="CHEBI:29035"/>
    </ligand>
</feature>
<feature type="binding site" evidence="1">
    <location>
        <position position="287"/>
    </location>
    <ligand>
        <name>substrate</name>
    </ligand>
</feature>
<accession>P30877</accession>
<comment type="catalytic activity">
    <reaction>
        <text>Hydrolysis of terminal, non-reducing alpha-D-galactose residues in alpha-D-galactosides, including galactose oligosaccharides, galactomannans and galactolipids.</text>
        <dbReference type="EC" id="3.2.1.22"/>
    </reaction>
</comment>
<comment type="cofactor">
    <cofactor evidence="1">
        <name>Mn(2+)</name>
        <dbReference type="ChEBI" id="CHEBI:29035"/>
    </cofactor>
    <text evidence="1">Binds 1 Mn(2+) ion per subunit.</text>
</comment>
<comment type="cofactor">
    <cofactor evidence="1">
        <name>NAD(+)</name>
        <dbReference type="ChEBI" id="CHEBI:57540"/>
    </cofactor>
    <text evidence="1">Binds 1 NAD(+) per subunit.</text>
</comment>
<comment type="subunit">
    <text evidence="1">Homodimer.</text>
</comment>
<comment type="similarity">
    <text evidence="2">Belongs to the glycosyl hydrolase 4 family.</text>
</comment>
<reference key="1">
    <citation type="journal article" date="2001" name="Nature">
        <title>Complete genome sequence of Salmonella enterica serovar Typhimurium LT2.</title>
        <authorList>
            <person name="McClelland M."/>
            <person name="Sanderson K.E."/>
            <person name="Spieth J."/>
            <person name="Clifton S.W."/>
            <person name="Latreille P."/>
            <person name="Courtney L."/>
            <person name="Porwollik S."/>
            <person name="Ali J."/>
            <person name="Dante M."/>
            <person name="Du F."/>
            <person name="Hou S."/>
            <person name="Layman D."/>
            <person name="Leonard S."/>
            <person name="Nguyen C."/>
            <person name="Scott K."/>
            <person name="Holmes A."/>
            <person name="Grewal N."/>
            <person name="Mulvaney E."/>
            <person name="Ryan E."/>
            <person name="Sun H."/>
            <person name="Florea L."/>
            <person name="Miller W."/>
            <person name="Stoneking T."/>
            <person name="Nhan M."/>
            <person name="Waterston R."/>
            <person name="Wilson R.K."/>
        </authorList>
    </citation>
    <scope>NUCLEOTIDE SEQUENCE [LARGE SCALE GENOMIC DNA]</scope>
    <source>
        <strain>LT2 / SGSC1412 / ATCC 700720</strain>
    </source>
</reference>
<reference key="2">
    <citation type="journal article" date="1992" name="Mol. Gen. Genet.">
        <title>Cloning and sequencing of the melB gene encoding the melibiose permease of Salmonella typhimurium LT2.</title>
        <authorList>
            <person name="Mizushima K."/>
            <person name="Awakihara S."/>
            <person name="Kuroda M."/>
            <person name="Ishikawa T."/>
            <person name="Tsuda M."/>
            <person name="Tsuchiya T."/>
        </authorList>
    </citation>
    <scope>NUCLEOTIDE SEQUENCE [GENOMIC DNA] OF 409-451</scope>
    <source>
        <strain>LT2</strain>
    </source>
</reference>
<proteinExistence type="inferred from homology"/>
<sequence>MMTAPKITFIGAGSTIFVKNILGDVFHREALKSAHVALMDIDETRLEESHIVVRKLMDSAGASGRITCHTNQKAALQDADFVVVAFQIGGYEPCTVTDFEVCKRHGLEQTIADTLGPGGIMRALRTIPHLWRICEDMTEVCPKATMLNYVNPMAMNTWAMYARYPHIKQVGLCHSVQGTAEELARDLNIDPTSLRYRCAGINHMAFYLELERKTADGTYVNLYPELLAAYDAGQAPKPNIHGNERCQNIVRYEMFKKLGYFVTESSEHFAEYTPWFIKPGREDLIARYKVPLDEYPKRCVEQLANWHKELEEYKTAERIDIKPSREYASTIMNALWTGEPSVIYGNVRNEGLIDNLPQGSCVEVACLVDANGIQPTKVGTIPSHLAAMMQTNINVQTLLTEAILTENRDRVYHAAMMDPHTAAVLGIEEIYALVDDLIAAHGDWLPAWLRR</sequence>
<evidence type="ECO:0000250" key="1"/>
<evidence type="ECO:0000305" key="2"/>
<keyword id="KW-0119">Carbohydrate metabolism</keyword>
<keyword id="KW-0326">Glycosidase</keyword>
<keyword id="KW-0378">Hydrolase</keyword>
<keyword id="KW-0464">Manganese</keyword>
<keyword id="KW-0479">Metal-binding</keyword>
<keyword id="KW-0520">NAD</keyword>
<keyword id="KW-1185">Reference proteome</keyword>
<dbReference type="EC" id="3.2.1.22"/>
<dbReference type="EMBL" id="AE006468">
    <property type="protein sequence ID" value="AAL23122.1"/>
    <property type="molecule type" value="Genomic_DNA"/>
</dbReference>
<dbReference type="EMBL" id="X62101">
    <property type="protein sequence ID" value="CAA44010.1"/>
    <property type="molecule type" value="Genomic_DNA"/>
</dbReference>
<dbReference type="PIR" id="S42852">
    <property type="entry name" value="S42852"/>
</dbReference>
<dbReference type="RefSeq" id="NP_463163.1">
    <property type="nucleotide sequence ID" value="NC_003197.2"/>
</dbReference>
<dbReference type="RefSeq" id="WP_001520868.1">
    <property type="nucleotide sequence ID" value="NC_003197.2"/>
</dbReference>
<dbReference type="SMR" id="P30877"/>
<dbReference type="STRING" id="99287.STM4298"/>
<dbReference type="CAZy" id="GH4">
    <property type="family name" value="Glycoside Hydrolase Family 4"/>
</dbReference>
<dbReference type="PaxDb" id="99287-STM4298"/>
<dbReference type="DNASU" id="1255824"/>
<dbReference type="GeneID" id="1255824"/>
<dbReference type="KEGG" id="stm:STM4298"/>
<dbReference type="PATRIC" id="fig|99287.12.peg.4520"/>
<dbReference type="HOGENOM" id="CLU_045951_1_1_6"/>
<dbReference type="OMA" id="EHNAEYH"/>
<dbReference type="PhylomeDB" id="P30877"/>
<dbReference type="BioCyc" id="SENT99287:STM4298-MONOMER"/>
<dbReference type="Proteomes" id="UP000001014">
    <property type="component" value="Chromosome"/>
</dbReference>
<dbReference type="GO" id="GO:0005829">
    <property type="term" value="C:cytosol"/>
    <property type="evidence" value="ECO:0000318"/>
    <property type="project" value="GO_Central"/>
</dbReference>
<dbReference type="GO" id="GO:0004557">
    <property type="term" value="F:alpha-galactosidase activity"/>
    <property type="evidence" value="ECO:0000318"/>
    <property type="project" value="GO_Central"/>
</dbReference>
<dbReference type="GO" id="GO:0046872">
    <property type="term" value="F:metal ion binding"/>
    <property type="evidence" value="ECO:0007669"/>
    <property type="project" value="UniProtKB-KW"/>
</dbReference>
<dbReference type="GO" id="GO:0016616">
    <property type="term" value="F:oxidoreductase activity, acting on the CH-OH group of donors, NAD or NADP as acceptor"/>
    <property type="evidence" value="ECO:0007669"/>
    <property type="project" value="InterPro"/>
</dbReference>
<dbReference type="GO" id="GO:0005975">
    <property type="term" value="P:carbohydrate metabolic process"/>
    <property type="evidence" value="ECO:0007669"/>
    <property type="project" value="InterPro"/>
</dbReference>
<dbReference type="CDD" id="cd05297">
    <property type="entry name" value="GH4_alpha_glucosidase_galactosidase"/>
    <property type="match status" value="1"/>
</dbReference>
<dbReference type="FunFam" id="3.90.1820.10:FF:000001">
    <property type="entry name" value="Alpha-galactosidase"/>
    <property type="match status" value="1"/>
</dbReference>
<dbReference type="Gene3D" id="3.90.1820.10">
    <property type="entry name" value="AglA-like glucosidase"/>
    <property type="match status" value="1"/>
</dbReference>
<dbReference type="InterPro" id="IPR053715">
    <property type="entry name" value="GH4_Enzyme_sf"/>
</dbReference>
<dbReference type="InterPro" id="IPR019802">
    <property type="entry name" value="GlycHydrolase_4_CS"/>
</dbReference>
<dbReference type="InterPro" id="IPR001088">
    <property type="entry name" value="Glyco_hydro_4"/>
</dbReference>
<dbReference type="InterPro" id="IPR022616">
    <property type="entry name" value="Glyco_hydro_4_C"/>
</dbReference>
<dbReference type="InterPro" id="IPR015955">
    <property type="entry name" value="Lactate_DH/Glyco_Ohase_4_C"/>
</dbReference>
<dbReference type="InterPro" id="IPR036291">
    <property type="entry name" value="NAD(P)-bd_dom_sf"/>
</dbReference>
<dbReference type="NCBIfam" id="NF011657">
    <property type="entry name" value="PRK15076.1"/>
    <property type="match status" value="1"/>
</dbReference>
<dbReference type="PANTHER" id="PTHR32092">
    <property type="entry name" value="6-PHOSPHO-BETA-GLUCOSIDASE-RELATED"/>
    <property type="match status" value="1"/>
</dbReference>
<dbReference type="PANTHER" id="PTHR32092:SF6">
    <property type="entry name" value="ALPHA-GALACTOSIDASE"/>
    <property type="match status" value="1"/>
</dbReference>
<dbReference type="Pfam" id="PF02056">
    <property type="entry name" value="Glyco_hydro_4"/>
    <property type="match status" value="1"/>
</dbReference>
<dbReference type="Pfam" id="PF11975">
    <property type="entry name" value="Glyco_hydro_4C"/>
    <property type="match status" value="1"/>
</dbReference>
<dbReference type="PRINTS" id="PR00732">
    <property type="entry name" value="GLHYDRLASE4"/>
</dbReference>
<dbReference type="SUPFAM" id="SSF56327">
    <property type="entry name" value="LDH C-terminal domain-like"/>
    <property type="match status" value="1"/>
</dbReference>
<dbReference type="SUPFAM" id="SSF51735">
    <property type="entry name" value="NAD(P)-binding Rossmann-fold domains"/>
    <property type="match status" value="1"/>
</dbReference>
<dbReference type="PROSITE" id="PS01324">
    <property type="entry name" value="GLYCOSYL_HYDROL_F4"/>
    <property type="match status" value="1"/>
</dbReference>
<name>AGAL_SALTY</name>
<protein>
    <recommendedName>
        <fullName>Alpha-galactosidase</fullName>
        <ecNumber>3.2.1.22</ecNumber>
    </recommendedName>
    <alternativeName>
        <fullName>Melibiase</fullName>
    </alternativeName>
</protein>
<organism>
    <name type="scientific">Salmonella typhimurium (strain LT2 / SGSC1412 / ATCC 700720)</name>
    <dbReference type="NCBI Taxonomy" id="99287"/>
    <lineage>
        <taxon>Bacteria</taxon>
        <taxon>Pseudomonadati</taxon>
        <taxon>Pseudomonadota</taxon>
        <taxon>Gammaproteobacteria</taxon>
        <taxon>Enterobacterales</taxon>
        <taxon>Enterobacteriaceae</taxon>
        <taxon>Salmonella</taxon>
    </lineage>
</organism>
<gene>
    <name type="primary">melA</name>
    <name type="ordered locus">STM4298</name>
</gene>